<comment type="function">
    <text evidence="1">Located on the platform of the 30S subunit, it bridges several disparate RNA helices of the 16S rRNA. Forms part of the Shine-Dalgarno cleft in the 70S ribosome.</text>
</comment>
<comment type="subunit">
    <text evidence="1">Part of the 30S ribosomal subunit. Interacts with proteins S7 and S18. Binds to IF-3.</text>
</comment>
<comment type="similarity">
    <text evidence="1">Belongs to the universal ribosomal protein uS11 family.</text>
</comment>
<evidence type="ECO:0000255" key="1">
    <source>
        <dbReference type="HAMAP-Rule" id="MF_01310"/>
    </source>
</evidence>
<evidence type="ECO:0000305" key="2"/>
<keyword id="KW-1185">Reference proteome</keyword>
<keyword id="KW-0687">Ribonucleoprotein</keyword>
<keyword id="KW-0689">Ribosomal protein</keyword>
<keyword id="KW-0694">RNA-binding</keyword>
<keyword id="KW-0699">rRNA-binding</keyword>
<name>RS11_CHLTE</name>
<accession>Q8KAJ6</accession>
<protein>
    <recommendedName>
        <fullName evidence="1">Small ribosomal subunit protein uS11</fullName>
    </recommendedName>
    <alternativeName>
        <fullName evidence="2">30S ribosomal protein S11</fullName>
    </alternativeName>
</protein>
<organism>
    <name type="scientific">Chlorobaculum tepidum (strain ATCC 49652 / DSM 12025 / NBRC 103806 / TLS)</name>
    <name type="common">Chlorobium tepidum</name>
    <dbReference type="NCBI Taxonomy" id="194439"/>
    <lineage>
        <taxon>Bacteria</taxon>
        <taxon>Pseudomonadati</taxon>
        <taxon>Chlorobiota</taxon>
        <taxon>Chlorobiia</taxon>
        <taxon>Chlorobiales</taxon>
        <taxon>Chlorobiaceae</taxon>
        <taxon>Chlorobaculum</taxon>
    </lineage>
</organism>
<dbReference type="EMBL" id="AE006470">
    <property type="protein sequence ID" value="AAM73380.1"/>
    <property type="molecule type" value="Genomic_DNA"/>
</dbReference>
<dbReference type="RefSeq" id="NP_663038.1">
    <property type="nucleotide sequence ID" value="NC_002932.3"/>
</dbReference>
<dbReference type="RefSeq" id="WP_010933817.1">
    <property type="nucleotide sequence ID" value="NC_002932.3"/>
</dbReference>
<dbReference type="SMR" id="Q8KAJ6"/>
<dbReference type="STRING" id="194439.CT2164"/>
<dbReference type="EnsemblBacteria" id="AAM73380">
    <property type="protein sequence ID" value="AAM73380"/>
    <property type="gene ID" value="CT2164"/>
</dbReference>
<dbReference type="KEGG" id="cte:CT2164"/>
<dbReference type="PATRIC" id="fig|194439.7.peg.1963"/>
<dbReference type="eggNOG" id="COG0100">
    <property type="taxonomic scope" value="Bacteria"/>
</dbReference>
<dbReference type="HOGENOM" id="CLU_072439_5_0_10"/>
<dbReference type="OrthoDB" id="9806415at2"/>
<dbReference type="Proteomes" id="UP000001007">
    <property type="component" value="Chromosome"/>
</dbReference>
<dbReference type="GO" id="GO:1990904">
    <property type="term" value="C:ribonucleoprotein complex"/>
    <property type="evidence" value="ECO:0007669"/>
    <property type="project" value="UniProtKB-KW"/>
</dbReference>
<dbReference type="GO" id="GO:0005840">
    <property type="term" value="C:ribosome"/>
    <property type="evidence" value="ECO:0007669"/>
    <property type="project" value="UniProtKB-KW"/>
</dbReference>
<dbReference type="GO" id="GO:0019843">
    <property type="term" value="F:rRNA binding"/>
    <property type="evidence" value="ECO:0007669"/>
    <property type="project" value="UniProtKB-UniRule"/>
</dbReference>
<dbReference type="GO" id="GO:0003735">
    <property type="term" value="F:structural constituent of ribosome"/>
    <property type="evidence" value="ECO:0007669"/>
    <property type="project" value="InterPro"/>
</dbReference>
<dbReference type="GO" id="GO:0006412">
    <property type="term" value="P:translation"/>
    <property type="evidence" value="ECO:0007669"/>
    <property type="project" value="UniProtKB-UniRule"/>
</dbReference>
<dbReference type="FunFam" id="3.30.420.80:FF:000004">
    <property type="entry name" value="30S ribosomal protein S11"/>
    <property type="match status" value="1"/>
</dbReference>
<dbReference type="Gene3D" id="3.30.420.80">
    <property type="entry name" value="Ribosomal protein S11"/>
    <property type="match status" value="1"/>
</dbReference>
<dbReference type="HAMAP" id="MF_01310">
    <property type="entry name" value="Ribosomal_uS11"/>
    <property type="match status" value="1"/>
</dbReference>
<dbReference type="InterPro" id="IPR001971">
    <property type="entry name" value="Ribosomal_uS11"/>
</dbReference>
<dbReference type="InterPro" id="IPR019981">
    <property type="entry name" value="Ribosomal_uS11_bac-type"/>
</dbReference>
<dbReference type="InterPro" id="IPR018102">
    <property type="entry name" value="Ribosomal_uS11_CS"/>
</dbReference>
<dbReference type="InterPro" id="IPR036967">
    <property type="entry name" value="Ribosomal_uS11_sf"/>
</dbReference>
<dbReference type="NCBIfam" id="NF003698">
    <property type="entry name" value="PRK05309.1"/>
    <property type="match status" value="1"/>
</dbReference>
<dbReference type="NCBIfam" id="TIGR03632">
    <property type="entry name" value="uS11_bact"/>
    <property type="match status" value="1"/>
</dbReference>
<dbReference type="PANTHER" id="PTHR11759">
    <property type="entry name" value="40S RIBOSOMAL PROTEIN S14/30S RIBOSOMAL PROTEIN S11"/>
    <property type="match status" value="1"/>
</dbReference>
<dbReference type="Pfam" id="PF00411">
    <property type="entry name" value="Ribosomal_S11"/>
    <property type="match status" value="1"/>
</dbReference>
<dbReference type="PIRSF" id="PIRSF002131">
    <property type="entry name" value="Ribosomal_S11"/>
    <property type="match status" value="1"/>
</dbReference>
<dbReference type="SUPFAM" id="SSF53137">
    <property type="entry name" value="Translational machinery components"/>
    <property type="match status" value="1"/>
</dbReference>
<dbReference type="PROSITE" id="PS00054">
    <property type="entry name" value="RIBOSOMAL_S11"/>
    <property type="match status" value="1"/>
</dbReference>
<sequence>MATASRKKKKVKVTPEGTVHIKASFNNVMVTITDTLGNTVSWSSAGKNGFKGSKKNTPYASQVTSEAAAKEAYDLGMRYVDVLIKGPGSGRDAAIRALQGVGLEVRSIRDITPLPHNGCRPPKRRRV</sequence>
<reference key="1">
    <citation type="journal article" date="2002" name="Proc. Natl. Acad. Sci. U.S.A.">
        <title>The complete genome sequence of Chlorobium tepidum TLS, a photosynthetic, anaerobic, green-sulfur bacterium.</title>
        <authorList>
            <person name="Eisen J.A."/>
            <person name="Nelson K.E."/>
            <person name="Paulsen I.T."/>
            <person name="Heidelberg J.F."/>
            <person name="Wu M."/>
            <person name="Dodson R.J."/>
            <person name="DeBoy R.T."/>
            <person name="Gwinn M.L."/>
            <person name="Nelson W.C."/>
            <person name="Haft D.H."/>
            <person name="Hickey E.K."/>
            <person name="Peterson J.D."/>
            <person name="Durkin A.S."/>
            <person name="Kolonay J.F."/>
            <person name="Yang F."/>
            <person name="Holt I.E."/>
            <person name="Umayam L.A."/>
            <person name="Mason T.M."/>
            <person name="Brenner M."/>
            <person name="Shea T.P."/>
            <person name="Parksey D.S."/>
            <person name="Nierman W.C."/>
            <person name="Feldblyum T.V."/>
            <person name="Hansen C.L."/>
            <person name="Craven M.B."/>
            <person name="Radune D."/>
            <person name="Vamathevan J.J."/>
            <person name="Khouri H.M."/>
            <person name="White O."/>
            <person name="Gruber T.M."/>
            <person name="Ketchum K.A."/>
            <person name="Venter J.C."/>
            <person name="Tettelin H."/>
            <person name="Bryant D.A."/>
            <person name="Fraser C.M."/>
        </authorList>
    </citation>
    <scope>NUCLEOTIDE SEQUENCE [LARGE SCALE GENOMIC DNA]</scope>
    <source>
        <strain>ATCC 49652 / DSM 12025 / NBRC 103806 / TLS</strain>
    </source>
</reference>
<gene>
    <name evidence="1" type="primary">rpsK</name>
    <name type="ordered locus">CT2164</name>
</gene>
<feature type="chain" id="PRO_0000123131" description="Small ribosomal subunit protein uS11">
    <location>
        <begin position="1"/>
        <end position="127"/>
    </location>
</feature>
<proteinExistence type="inferred from homology"/>